<accession>Q6UXD7</accession>
<accession>A8K7J5</accession>
<accession>Q6XYD4</accession>
<accession>Q8N6H1</accession>
<accession>Q9H6H6</accession>
<dbReference type="EMBL" id="AY358401">
    <property type="protein sequence ID" value="AAQ88767.1"/>
    <property type="molecule type" value="mRNA"/>
</dbReference>
<dbReference type="EMBL" id="AK025922">
    <property type="protein sequence ID" value="BAB15283.1"/>
    <property type="molecule type" value="mRNA"/>
</dbReference>
<dbReference type="EMBL" id="AK292010">
    <property type="protein sequence ID" value="BAF84699.1"/>
    <property type="molecule type" value="mRNA"/>
</dbReference>
<dbReference type="EMBL" id="BC030246">
    <property type="protein sequence ID" value="AAH30246.1"/>
    <property type="molecule type" value="mRNA"/>
</dbReference>
<dbReference type="EMBL" id="AY203936">
    <property type="protein sequence ID" value="AAP34459.1"/>
    <property type="status" value="ALT_SEQ"/>
    <property type="molecule type" value="mRNA"/>
</dbReference>
<dbReference type="CCDS" id="CCDS3338.1">
    <molecule id="Q6UXD7-2"/>
</dbReference>
<dbReference type="CCDS" id="CCDS75086.1">
    <molecule id="Q6UXD7-1"/>
</dbReference>
<dbReference type="CCDS" id="CCDS77883.1">
    <molecule id="Q6UXD7-3"/>
</dbReference>
<dbReference type="RefSeq" id="NP_001281270.1">
    <molecule id="Q6UXD7-1"/>
    <property type="nucleotide sequence ID" value="NM_001294341.2"/>
</dbReference>
<dbReference type="RefSeq" id="NP_001281271.1">
    <molecule id="Q6UXD7-3"/>
    <property type="nucleotide sequence ID" value="NM_001294342.2"/>
</dbReference>
<dbReference type="RefSeq" id="NP_115595.2">
    <molecule id="Q6UXD7-2"/>
    <property type="nucleotide sequence ID" value="NM_032219.3"/>
</dbReference>
<dbReference type="RefSeq" id="XP_054207000.1">
    <molecule id="Q6UXD7-1"/>
    <property type="nucleotide sequence ID" value="XM_054351025.1"/>
</dbReference>
<dbReference type="RefSeq" id="XP_054207001.1">
    <molecule id="Q6UXD7-2"/>
    <property type="nucleotide sequence ID" value="XM_054351026.1"/>
</dbReference>
<dbReference type="SMR" id="Q6UXD7"/>
<dbReference type="BioGRID" id="123930">
    <property type="interactions" value="3"/>
</dbReference>
<dbReference type="FunCoup" id="Q6UXD7">
    <property type="interactions" value="2"/>
</dbReference>
<dbReference type="IntAct" id="Q6UXD7">
    <property type="interactions" value="1"/>
</dbReference>
<dbReference type="STRING" id="9606.ENSP00000384616"/>
<dbReference type="TCDB" id="2.A.1.28.8">
    <property type="family name" value="the major facilitator superfamily (mfs)"/>
</dbReference>
<dbReference type="GlyGen" id="Q6UXD7">
    <property type="glycosylation" value="5 sites, 1 O-linked glycan (2 sites)"/>
</dbReference>
<dbReference type="iPTMnet" id="Q6UXD7"/>
<dbReference type="PhosphoSitePlus" id="Q6UXD7"/>
<dbReference type="BioMuta" id="MFSD7"/>
<dbReference type="DMDM" id="74738207"/>
<dbReference type="MassIVE" id="Q6UXD7"/>
<dbReference type="PaxDb" id="9606-ENSP00000384616"/>
<dbReference type="PeptideAtlas" id="Q6UXD7"/>
<dbReference type="Antibodypedia" id="42992">
    <property type="antibodies" value="27 antibodies from 15 providers"/>
</dbReference>
<dbReference type="DNASU" id="84179"/>
<dbReference type="Ensembl" id="ENST00000322224.9">
    <molecule id="Q6UXD7-2"/>
    <property type="protein sequence ID" value="ENSP00000320234.4"/>
    <property type="gene ID" value="ENSG00000169026.13"/>
</dbReference>
<dbReference type="Ensembl" id="ENST00000347950.9">
    <molecule id="Q6UXD7-3"/>
    <property type="protein sequence ID" value="ENSP00000307545.5"/>
    <property type="gene ID" value="ENSG00000169026.13"/>
</dbReference>
<dbReference type="Ensembl" id="ENST00000404286.6">
    <molecule id="Q6UXD7-1"/>
    <property type="protein sequence ID" value="ENSP00000384616.2"/>
    <property type="gene ID" value="ENSG00000169026.13"/>
</dbReference>
<dbReference type="GeneID" id="84179"/>
<dbReference type="KEGG" id="hsa:84179"/>
<dbReference type="MANE-Select" id="ENST00000322224.9">
    <molecule id="Q6UXD7-2"/>
    <property type="protein sequence ID" value="ENSP00000320234.4"/>
    <property type="RefSeq nucleotide sequence ID" value="NM_032219.4"/>
    <property type="RefSeq protein sequence ID" value="NP_115595.2"/>
</dbReference>
<dbReference type="UCSC" id="uc003gax.4">
    <molecule id="Q6UXD7-1"/>
    <property type="organism name" value="human"/>
</dbReference>
<dbReference type="AGR" id="HGNC:26177"/>
<dbReference type="CTD" id="84179"/>
<dbReference type="DisGeNET" id="84179"/>
<dbReference type="GeneCards" id="SLC49A3"/>
<dbReference type="HGNC" id="HGNC:26177">
    <property type="gene designation" value="SLC49A3"/>
</dbReference>
<dbReference type="HPA" id="ENSG00000169026">
    <property type="expression patterns" value="Low tissue specificity"/>
</dbReference>
<dbReference type="MIM" id="620318">
    <property type="type" value="gene"/>
</dbReference>
<dbReference type="neXtProt" id="NX_Q6UXD7"/>
<dbReference type="OpenTargets" id="ENSG00000169026"/>
<dbReference type="PharmGKB" id="PA143485534"/>
<dbReference type="VEuPathDB" id="HostDB:ENSG00000169026"/>
<dbReference type="eggNOG" id="KOG2563">
    <property type="taxonomic scope" value="Eukaryota"/>
</dbReference>
<dbReference type="GeneTree" id="ENSGT01030000234625"/>
<dbReference type="HOGENOM" id="CLU_023132_3_0_1"/>
<dbReference type="InParanoid" id="Q6UXD7"/>
<dbReference type="OMA" id="STICWTG"/>
<dbReference type="OrthoDB" id="422206at2759"/>
<dbReference type="PAN-GO" id="Q6UXD7">
    <property type="GO annotations" value="0 GO annotations based on evolutionary models"/>
</dbReference>
<dbReference type="PhylomeDB" id="Q6UXD7"/>
<dbReference type="TreeFam" id="TF314292"/>
<dbReference type="PathwayCommons" id="Q6UXD7"/>
<dbReference type="SignaLink" id="Q6UXD7"/>
<dbReference type="BioGRID-ORCS" id="84179">
    <property type="hits" value="3 hits in 1144 CRISPR screens"/>
</dbReference>
<dbReference type="GenomeRNAi" id="84179"/>
<dbReference type="Pharos" id="Q6UXD7">
    <property type="development level" value="Tdark"/>
</dbReference>
<dbReference type="PRO" id="PR:Q6UXD7"/>
<dbReference type="Proteomes" id="UP000005640">
    <property type="component" value="Chromosome 4"/>
</dbReference>
<dbReference type="RNAct" id="Q6UXD7">
    <property type="molecule type" value="protein"/>
</dbReference>
<dbReference type="Bgee" id="ENSG00000169026">
    <property type="expression patterns" value="Expressed in apex of heart and 97 other cell types or tissues"/>
</dbReference>
<dbReference type="ExpressionAtlas" id="Q6UXD7">
    <property type="expression patterns" value="baseline and differential"/>
</dbReference>
<dbReference type="GO" id="GO:0016020">
    <property type="term" value="C:membrane"/>
    <property type="evidence" value="ECO:0000318"/>
    <property type="project" value="GO_Central"/>
</dbReference>
<dbReference type="GO" id="GO:0022857">
    <property type="term" value="F:transmembrane transporter activity"/>
    <property type="evidence" value="ECO:0007669"/>
    <property type="project" value="InterPro"/>
</dbReference>
<dbReference type="CDD" id="cd17399">
    <property type="entry name" value="MFS_MFSD7"/>
    <property type="match status" value="1"/>
</dbReference>
<dbReference type="Gene3D" id="1.20.1250.20">
    <property type="entry name" value="MFS general substrate transporter like domains"/>
    <property type="match status" value="2"/>
</dbReference>
<dbReference type="InterPro" id="IPR049680">
    <property type="entry name" value="FLVCR1-2_SLC49-like"/>
</dbReference>
<dbReference type="InterPro" id="IPR011701">
    <property type="entry name" value="MFS"/>
</dbReference>
<dbReference type="InterPro" id="IPR036259">
    <property type="entry name" value="MFS_trans_sf"/>
</dbReference>
<dbReference type="PANTHER" id="PTHR10924">
    <property type="entry name" value="MAJOR FACILITATOR SUPERFAMILY PROTEIN-RELATED"/>
    <property type="match status" value="1"/>
</dbReference>
<dbReference type="PANTHER" id="PTHR10924:SF6">
    <property type="entry name" value="SOLUTE CARRIER FAMILY 49 MEMBER A3"/>
    <property type="match status" value="1"/>
</dbReference>
<dbReference type="Pfam" id="PF07690">
    <property type="entry name" value="MFS_1"/>
    <property type="match status" value="1"/>
</dbReference>
<dbReference type="SUPFAM" id="SSF103473">
    <property type="entry name" value="MFS general substrate transporter"/>
    <property type="match status" value="1"/>
</dbReference>
<reference key="1">
    <citation type="journal article" date="2003" name="Genome Res.">
        <title>The secreted protein discovery initiative (SPDI), a large-scale effort to identify novel human secreted and transmembrane proteins: a bioinformatics assessment.</title>
        <authorList>
            <person name="Clark H.F."/>
            <person name="Gurney A.L."/>
            <person name="Abaya E."/>
            <person name="Baker K."/>
            <person name="Baldwin D.T."/>
            <person name="Brush J."/>
            <person name="Chen J."/>
            <person name="Chow B."/>
            <person name="Chui C."/>
            <person name="Crowley C."/>
            <person name="Currell B."/>
            <person name="Deuel B."/>
            <person name="Dowd P."/>
            <person name="Eaton D."/>
            <person name="Foster J.S."/>
            <person name="Grimaldi C."/>
            <person name="Gu Q."/>
            <person name="Hass P.E."/>
            <person name="Heldens S."/>
            <person name="Huang A."/>
            <person name="Kim H.S."/>
            <person name="Klimowski L."/>
            <person name="Jin Y."/>
            <person name="Johnson S."/>
            <person name="Lee J."/>
            <person name="Lewis L."/>
            <person name="Liao D."/>
            <person name="Mark M.R."/>
            <person name="Robbie E."/>
            <person name="Sanchez C."/>
            <person name="Schoenfeld J."/>
            <person name="Seshagiri S."/>
            <person name="Simmons L."/>
            <person name="Singh J."/>
            <person name="Smith V."/>
            <person name="Stinson J."/>
            <person name="Vagts A."/>
            <person name="Vandlen R.L."/>
            <person name="Watanabe C."/>
            <person name="Wieand D."/>
            <person name="Woods K."/>
            <person name="Xie M.-H."/>
            <person name="Yansura D.G."/>
            <person name="Yi S."/>
            <person name="Yu G."/>
            <person name="Yuan J."/>
            <person name="Zhang M."/>
            <person name="Zhang Z."/>
            <person name="Goddard A.D."/>
            <person name="Wood W.I."/>
            <person name="Godowski P.J."/>
            <person name="Gray A.M."/>
        </authorList>
    </citation>
    <scope>NUCLEOTIDE SEQUENCE [LARGE SCALE MRNA] (ISOFORM 1)</scope>
</reference>
<reference key="2">
    <citation type="journal article" date="2004" name="Nat. Genet.">
        <title>Complete sequencing and characterization of 21,243 full-length human cDNAs.</title>
        <authorList>
            <person name="Ota T."/>
            <person name="Suzuki Y."/>
            <person name="Nishikawa T."/>
            <person name="Otsuki T."/>
            <person name="Sugiyama T."/>
            <person name="Irie R."/>
            <person name="Wakamatsu A."/>
            <person name="Hayashi K."/>
            <person name="Sato H."/>
            <person name="Nagai K."/>
            <person name="Kimura K."/>
            <person name="Makita H."/>
            <person name="Sekine M."/>
            <person name="Obayashi M."/>
            <person name="Nishi T."/>
            <person name="Shibahara T."/>
            <person name="Tanaka T."/>
            <person name="Ishii S."/>
            <person name="Yamamoto J."/>
            <person name="Saito K."/>
            <person name="Kawai Y."/>
            <person name="Isono Y."/>
            <person name="Nakamura Y."/>
            <person name="Nagahari K."/>
            <person name="Murakami K."/>
            <person name="Yasuda T."/>
            <person name="Iwayanagi T."/>
            <person name="Wagatsuma M."/>
            <person name="Shiratori A."/>
            <person name="Sudo H."/>
            <person name="Hosoiri T."/>
            <person name="Kaku Y."/>
            <person name="Kodaira H."/>
            <person name="Kondo H."/>
            <person name="Sugawara M."/>
            <person name="Takahashi M."/>
            <person name="Kanda K."/>
            <person name="Yokoi T."/>
            <person name="Furuya T."/>
            <person name="Kikkawa E."/>
            <person name="Omura Y."/>
            <person name="Abe K."/>
            <person name="Kamihara K."/>
            <person name="Katsuta N."/>
            <person name="Sato K."/>
            <person name="Tanikawa M."/>
            <person name="Yamazaki M."/>
            <person name="Ninomiya K."/>
            <person name="Ishibashi T."/>
            <person name="Yamashita H."/>
            <person name="Murakawa K."/>
            <person name="Fujimori K."/>
            <person name="Tanai H."/>
            <person name="Kimata M."/>
            <person name="Watanabe M."/>
            <person name="Hiraoka S."/>
            <person name="Chiba Y."/>
            <person name="Ishida S."/>
            <person name="Ono Y."/>
            <person name="Takiguchi S."/>
            <person name="Watanabe S."/>
            <person name="Yosida M."/>
            <person name="Hotuta T."/>
            <person name="Kusano J."/>
            <person name="Kanehori K."/>
            <person name="Takahashi-Fujii A."/>
            <person name="Hara H."/>
            <person name="Tanase T.-O."/>
            <person name="Nomura Y."/>
            <person name="Togiya S."/>
            <person name="Komai F."/>
            <person name="Hara R."/>
            <person name="Takeuchi K."/>
            <person name="Arita M."/>
            <person name="Imose N."/>
            <person name="Musashino K."/>
            <person name="Yuuki H."/>
            <person name="Oshima A."/>
            <person name="Sasaki N."/>
            <person name="Aotsuka S."/>
            <person name="Yoshikawa Y."/>
            <person name="Matsunawa H."/>
            <person name="Ichihara T."/>
            <person name="Shiohata N."/>
            <person name="Sano S."/>
            <person name="Moriya S."/>
            <person name="Momiyama H."/>
            <person name="Satoh N."/>
            <person name="Takami S."/>
            <person name="Terashima Y."/>
            <person name="Suzuki O."/>
            <person name="Nakagawa S."/>
            <person name="Senoh A."/>
            <person name="Mizoguchi H."/>
            <person name="Goto Y."/>
            <person name="Shimizu F."/>
            <person name="Wakebe H."/>
            <person name="Hishigaki H."/>
            <person name="Watanabe T."/>
            <person name="Sugiyama A."/>
            <person name="Takemoto M."/>
            <person name="Kawakami B."/>
            <person name="Yamazaki M."/>
            <person name="Watanabe K."/>
            <person name="Kumagai A."/>
            <person name="Itakura S."/>
            <person name="Fukuzumi Y."/>
            <person name="Fujimori Y."/>
            <person name="Komiyama M."/>
            <person name="Tashiro H."/>
            <person name="Tanigami A."/>
            <person name="Fujiwara T."/>
            <person name="Ono T."/>
            <person name="Yamada K."/>
            <person name="Fujii Y."/>
            <person name="Ozaki K."/>
            <person name="Hirao M."/>
            <person name="Ohmori Y."/>
            <person name="Kawabata A."/>
            <person name="Hikiji T."/>
            <person name="Kobatake N."/>
            <person name="Inagaki H."/>
            <person name="Ikema Y."/>
            <person name="Okamoto S."/>
            <person name="Okitani R."/>
            <person name="Kawakami T."/>
            <person name="Noguchi S."/>
            <person name="Itoh T."/>
            <person name="Shigeta K."/>
            <person name="Senba T."/>
            <person name="Matsumura K."/>
            <person name="Nakajima Y."/>
            <person name="Mizuno T."/>
            <person name="Morinaga M."/>
            <person name="Sasaki M."/>
            <person name="Togashi T."/>
            <person name="Oyama M."/>
            <person name="Hata H."/>
            <person name="Watanabe M."/>
            <person name="Komatsu T."/>
            <person name="Mizushima-Sugano J."/>
            <person name="Satoh T."/>
            <person name="Shirai Y."/>
            <person name="Takahashi Y."/>
            <person name="Nakagawa K."/>
            <person name="Okumura K."/>
            <person name="Nagase T."/>
            <person name="Nomura N."/>
            <person name="Kikuchi H."/>
            <person name="Masuho Y."/>
            <person name="Yamashita R."/>
            <person name="Nakai K."/>
            <person name="Yada T."/>
            <person name="Nakamura Y."/>
            <person name="Ohara O."/>
            <person name="Isogai T."/>
            <person name="Sugano S."/>
        </authorList>
    </citation>
    <scope>NUCLEOTIDE SEQUENCE [LARGE SCALE MRNA] (ISOFORMS 2 AND 3)</scope>
    <source>
        <tissue>Spleen</tissue>
    </source>
</reference>
<reference key="3">
    <citation type="journal article" date="2004" name="Genome Res.">
        <title>The status, quality, and expansion of the NIH full-length cDNA project: the Mammalian Gene Collection (MGC).</title>
        <authorList>
            <consortium name="The MGC Project Team"/>
        </authorList>
    </citation>
    <scope>NUCLEOTIDE SEQUENCE [LARGE SCALE MRNA] (ISOFORM 2)</scope>
    <source>
        <tissue>Leukocyte</tissue>
    </source>
</reference>
<reference key="4">
    <citation type="journal article" date="2004" name="Proc. Natl. Acad. Sci. U.S.A.">
        <title>Large-scale cDNA transfection screening for genes related to cancer development and progression.</title>
        <authorList>
            <person name="Wan D."/>
            <person name="Gong Y."/>
            <person name="Qin W."/>
            <person name="Zhang P."/>
            <person name="Li J."/>
            <person name="Wei L."/>
            <person name="Zhou X."/>
            <person name="Li H."/>
            <person name="Qiu X."/>
            <person name="Zhong F."/>
            <person name="He L."/>
            <person name="Yu J."/>
            <person name="Yao G."/>
            <person name="Jiang H."/>
            <person name="Qian L."/>
            <person name="Yu Y."/>
            <person name="Shu H."/>
            <person name="Chen X."/>
            <person name="Xu H."/>
            <person name="Guo M."/>
            <person name="Pan Z."/>
            <person name="Chen Y."/>
            <person name="Ge C."/>
            <person name="Yang S."/>
            <person name="Gu J."/>
        </authorList>
    </citation>
    <scope>NUCLEOTIDE SEQUENCE [LARGE SCALE MRNA] OF 196-560 (ISOFORMS 1/3)</scope>
</reference>
<feature type="chain" id="PRO_0000273408" description="Solute carrier family 49 member A3">
    <location>
        <begin position="1"/>
        <end position="560"/>
    </location>
</feature>
<feature type="transmembrane region" description="Helical" evidence="1">
    <location>
        <begin position="30"/>
        <end position="50"/>
    </location>
</feature>
<feature type="transmembrane region" description="Helical" evidence="1">
    <location>
        <begin position="70"/>
        <end position="90"/>
    </location>
</feature>
<feature type="transmembrane region" description="Helical" evidence="1">
    <location>
        <begin position="100"/>
        <end position="120"/>
    </location>
</feature>
<feature type="transmembrane region" description="Helical" evidence="1">
    <location>
        <begin position="125"/>
        <end position="145"/>
    </location>
</feature>
<feature type="transmembrane region" description="Helical" evidence="1">
    <location>
        <begin position="166"/>
        <end position="186"/>
    </location>
</feature>
<feature type="transmembrane region" description="Helical" evidence="1">
    <location>
        <begin position="192"/>
        <end position="212"/>
    </location>
</feature>
<feature type="transmembrane region" description="Helical" evidence="1">
    <location>
        <begin position="250"/>
        <end position="270"/>
    </location>
</feature>
<feature type="transmembrane region" description="Helical" evidence="1">
    <location>
        <begin position="282"/>
        <end position="302"/>
    </location>
</feature>
<feature type="transmembrane region" description="Helical" evidence="1">
    <location>
        <begin position="318"/>
        <end position="338"/>
    </location>
</feature>
<feature type="transmembrane region" description="Helical" evidence="1">
    <location>
        <begin position="341"/>
        <end position="361"/>
    </location>
</feature>
<feature type="transmembrane region" description="Helical" evidence="1">
    <location>
        <begin position="379"/>
        <end position="399"/>
    </location>
</feature>
<feature type="transmembrane region" description="Helical" evidence="1">
    <location>
        <begin position="422"/>
        <end position="442"/>
    </location>
</feature>
<feature type="region of interest" description="Disordered" evidence="2">
    <location>
        <begin position="451"/>
        <end position="540"/>
    </location>
</feature>
<feature type="compositionally biased region" description="Gly residues" evidence="2">
    <location>
        <begin position="466"/>
        <end position="481"/>
    </location>
</feature>
<feature type="splice variant" id="VSP_022547" description="In isoform 3." evidence="3">
    <location>
        <begin position="46"/>
        <end position="67"/>
    </location>
</feature>
<feature type="splice variant" id="VSP_022548" description="In isoform 3." evidence="3">
    <location>
        <begin position="99"/>
        <end position="195"/>
    </location>
</feature>
<feature type="splice variant" id="VSP_022549" description="In isoform 2." evidence="3 4">
    <location>
        <position position="242"/>
    </location>
</feature>
<feature type="sequence variant" id="VAR_030144" description="In dbSNP:rs11558585.">
    <original>S</original>
    <variation>P</variation>
    <location>
        <position position="170"/>
    </location>
</feature>
<feature type="sequence conflict" description="In Ref. 2; BAB15283." evidence="5" ref="2">
    <original>L</original>
    <variation>P</variation>
    <location>
        <position position="241"/>
    </location>
</feature>
<feature type="sequence conflict" description="In Ref. 2; BAB15283." evidence="5" ref="2">
    <original>P</original>
    <variation>L</variation>
    <location>
        <position position="406"/>
    </location>
</feature>
<sequence>MAGPTEAETGLAEPRALCAQRGHRTYARRWVFLLAISLLNCSNATLWLSFAPVADVIAEDLVLSMEQINWLSLVYLVVSTPFGVAAIWILDSVGLRAATILGAWLNFAGSVLRMVPCMVVGTQNPFAFLMGGQSLCALAQSLVIFSPAKLAALWFPEHQRATANMLATMSNPLGVLVANVLSPVLVKKGEDIPLMLGVYTIPAGVVCLLSTICLWESVPPTPPSAGAASSTSEKFLDGLKLQLMWNKAYVILAVCLGGMIGISASFSALLEQILCASGHSSGFSGLCGALFITFGILGALALGPYVDRTKHFTEATKIGLCLFSLACVPFALVSQLQGQTLALAATCSLLGLFGFSVGPVAMELAVECSFPVGEGAATGMIFVLGQAEGILIMLAMTALTVRRSEPSLSTCQQGEDPLDWTVSLLLMAGLCTFFSCILAVFFHTPYRRLQAESGEPPSTRNAVGGADSGPGVDRGGAGRAGVLGPSTATPECTARGASLEDPRGPGSPHPACHRATPRAQGPAATDAPSRPGRLAGRVQASRFIDPAGSHSSFSSPWVIT</sequence>
<keyword id="KW-0025">Alternative splicing</keyword>
<keyword id="KW-0472">Membrane</keyword>
<keyword id="KW-1267">Proteomics identification</keyword>
<keyword id="KW-1185">Reference proteome</keyword>
<keyword id="KW-0812">Transmembrane</keyword>
<keyword id="KW-1133">Transmembrane helix</keyword>
<keyword id="KW-0813">Transport</keyword>
<proteinExistence type="evidence at protein level"/>
<organism>
    <name type="scientific">Homo sapiens</name>
    <name type="common">Human</name>
    <dbReference type="NCBI Taxonomy" id="9606"/>
    <lineage>
        <taxon>Eukaryota</taxon>
        <taxon>Metazoa</taxon>
        <taxon>Chordata</taxon>
        <taxon>Craniata</taxon>
        <taxon>Vertebrata</taxon>
        <taxon>Euteleostomi</taxon>
        <taxon>Mammalia</taxon>
        <taxon>Eutheria</taxon>
        <taxon>Euarchontoglires</taxon>
        <taxon>Primates</taxon>
        <taxon>Haplorrhini</taxon>
        <taxon>Catarrhini</taxon>
        <taxon>Hominidae</taxon>
        <taxon>Homo</taxon>
    </lineage>
</organism>
<evidence type="ECO:0000255" key="1"/>
<evidence type="ECO:0000256" key="2">
    <source>
        <dbReference type="SAM" id="MobiDB-lite"/>
    </source>
</evidence>
<evidence type="ECO:0000303" key="3">
    <source>
    </source>
</evidence>
<evidence type="ECO:0000303" key="4">
    <source>
    </source>
</evidence>
<evidence type="ECO:0000305" key="5"/>
<evidence type="ECO:0000312" key="6">
    <source>
        <dbReference type="HGNC" id="HGNC:26177"/>
    </source>
</evidence>
<gene>
    <name evidence="6" type="primary">SLC49A3</name>
    <name type="synonym">MFSD7</name>
    <name type="ORF">LP2561</name>
    <name type="ORF">UNQ385/PRO717</name>
</gene>
<protein>
    <recommendedName>
        <fullName evidence="6">Solute carrier family 49 member A3</fullName>
    </recommendedName>
    <alternativeName>
        <fullName>Major facilitator superfamily domain-containing protein 7</fullName>
    </alternativeName>
    <alternativeName>
        <fullName>Myosin light polypeptide 5 regulatory protein</fullName>
        <shortName>MYL5</shortName>
    </alternativeName>
</protein>
<comment type="interaction">
    <interactant intactId="EBI-17682849">
        <id>Q6UXD7-2</id>
    </interactant>
    <interactant intactId="EBI-781551">
        <id>Q9Y282</id>
        <label>ERGIC3</label>
    </interactant>
    <organismsDiffer>false</organismsDiffer>
    <experiments>3</experiments>
</comment>
<comment type="subcellular location">
    <subcellularLocation>
        <location evidence="5">Membrane</location>
        <topology evidence="5">Multi-pass membrane protein</topology>
    </subcellularLocation>
</comment>
<comment type="alternative products">
    <event type="alternative splicing"/>
    <isoform>
        <id>Q6UXD7-1</id>
        <name>1</name>
        <sequence type="displayed"/>
    </isoform>
    <isoform>
        <id>Q6UXD7-2</id>
        <name>2</name>
        <sequence type="described" ref="VSP_022549"/>
    </isoform>
    <isoform>
        <id>Q6UXD7-3</id>
        <name>3</name>
        <sequence type="described" ref="VSP_022547 VSP_022548"/>
    </isoform>
</comment>
<comment type="similarity">
    <text evidence="5">Belongs to the major facilitator superfamily.</text>
</comment>
<comment type="sequence caution" evidence="5">
    <conflict type="miscellaneous discrepancy">
        <sequence resource="EMBL-CDS" id="AAP34459"/>
    </conflict>
    <text>Intron retention.</text>
</comment>
<name>S49A3_HUMAN</name>